<sequence length="142" mass="15776">MGKTRGMGAARKLKNHRRRQRWADKSYKKSHLGNEWKKPFAGSSHAKGIVLEKIGIEAKQPNSAIRKCARVQLIKNGKKIAAFVPNDGCLNYIEENDEVLIAGFGRKGHAVGDIPGVRFKVVKVSGVSLLALFKEKKEKPRS</sequence>
<evidence type="ECO:0000250" key="1"/>
<evidence type="ECO:0000256" key="2">
    <source>
        <dbReference type="SAM" id="MobiDB-lite"/>
    </source>
</evidence>
<evidence type="ECO:0000305" key="3"/>
<keyword id="KW-0379">Hydroxylation</keyword>
<keyword id="KW-0687">Ribonucleoprotein</keyword>
<keyword id="KW-0689">Ribosomal protein</keyword>
<feature type="chain" id="PRO_0000146474" description="Small ribosomal subunit protein uS12">
    <location>
        <begin position="1"/>
        <end position="142"/>
    </location>
</feature>
<feature type="region of interest" description="Disordered" evidence="2">
    <location>
        <begin position="1"/>
        <end position="30"/>
    </location>
</feature>
<feature type="compositionally biased region" description="Basic residues" evidence="2">
    <location>
        <begin position="11"/>
        <end position="20"/>
    </location>
</feature>
<feature type="compositionally biased region" description="Basic and acidic residues" evidence="2">
    <location>
        <begin position="21"/>
        <end position="30"/>
    </location>
</feature>
<feature type="modified residue" description="Hydroxyproline" evidence="1">
    <location>
        <position position="61"/>
    </location>
</feature>
<comment type="similarity">
    <text evidence="3">Belongs to the universal ribosomal protein uS12 family.</text>
</comment>
<gene>
    <name type="primary">RPS23</name>
</gene>
<protein>
    <recommendedName>
        <fullName evidence="3">Small ribosomal subunit protein uS12</fullName>
    </recommendedName>
    <alternativeName>
        <fullName>40S ribosomal protein S23</fullName>
    </alternativeName>
    <alternativeName>
        <fullName>S12</fullName>
    </alternativeName>
</protein>
<name>RS23_FRAAN</name>
<accession>P46297</accession>
<reference key="1">
    <citation type="journal article" date="1995" name="Plant Mol. Biol.">
        <title>Identification of mRNAs with enhanced expression in ripening strawberry fruit using polymerase chain reaction differential display.</title>
        <authorList>
            <person name="Wilkinson J.Q."/>
            <person name="Lanahan M.B."/>
            <person name="Conner T.W."/>
            <person name="Klee H.J."/>
        </authorList>
    </citation>
    <scope>NUCLEOTIDE SEQUENCE [MRNA]</scope>
    <source>
        <strain>cv. Pajaro</strain>
        <tissue>Fruit</tissue>
    </source>
</reference>
<organism>
    <name type="scientific">Fragaria ananassa</name>
    <name type="common">Strawberry</name>
    <name type="synonym">Fragaria chiloensis x Fragaria virginiana</name>
    <dbReference type="NCBI Taxonomy" id="3747"/>
    <lineage>
        <taxon>Eukaryota</taxon>
        <taxon>Viridiplantae</taxon>
        <taxon>Streptophyta</taxon>
        <taxon>Embryophyta</taxon>
        <taxon>Tracheophyta</taxon>
        <taxon>Spermatophyta</taxon>
        <taxon>Magnoliopsida</taxon>
        <taxon>eudicotyledons</taxon>
        <taxon>Gunneridae</taxon>
        <taxon>Pentapetalae</taxon>
        <taxon>rosids</taxon>
        <taxon>fabids</taxon>
        <taxon>Rosales</taxon>
        <taxon>Rosaceae</taxon>
        <taxon>Rosoideae</taxon>
        <taxon>Potentilleae</taxon>
        <taxon>Fragariinae</taxon>
        <taxon>Fragaria</taxon>
    </lineage>
</organism>
<dbReference type="EMBL" id="U19940">
    <property type="protein sequence ID" value="AAA79921.1"/>
    <property type="molecule type" value="mRNA"/>
</dbReference>
<dbReference type="PIR" id="S56673">
    <property type="entry name" value="S56673"/>
</dbReference>
<dbReference type="SMR" id="P46297"/>
<dbReference type="GO" id="GO:0015935">
    <property type="term" value="C:small ribosomal subunit"/>
    <property type="evidence" value="ECO:0007669"/>
    <property type="project" value="InterPro"/>
</dbReference>
<dbReference type="GO" id="GO:0003735">
    <property type="term" value="F:structural constituent of ribosome"/>
    <property type="evidence" value="ECO:0007669"/>
    <property type="project" value="InterPro"/>
</dbReference>
<dbReference type="GO" id="GO:0006412">
    <property type="term" value="P:translation"/>
    <property type="evidence" value="ECO:0007669"/>
    <property type="project" value="InterPro"/>
</dbReference>
<dbReference type="CDD" id="cd03367">
    <property type="entry name" value="Ribosomal_S23"/>
    <property type="match status" value="1"/>
</dbReference>
<dbReference type="FunFam" id="2.40.50.140:FF:000007">
    <property type="entry name" value="40S ribosomal protein S23"/>
    <property type="match status" value="1"/>
</dbReference>
<dbReference type="Gene3D" id="2.40.50.140">
    <property type="entry name" value="Nucleic acid-binding proteins"/>
    <property type="match status" value="1"/>
</dbReference>
<dbReference type="InterPro" id="IPR012340">
    <property type="entry name" value="NA-bd_OB-fold"/>
</dbReference>
<dbReference type="InterPro" id="IPR006032">
    <property type="entry name" value="Ribosomal_uS12"/>
</dbReference>
<dbReference type="InterPro" id="IPR005680">
    <property type="entry name" value="Ribosomal_uS12_euk/arc"/>
</dbReference>
<dbReference type="NCBIfam" id="TIGR00982">
    <property type="entry name" value="uS12_E_A"/>
    <property type="match status" value="1"/>
</dbReference>
<dbReference type="PANTHER" id="PTHR11652">
    <property type="entry name" value="30S RIBOSOMAL PROTEIN S12 FAMILY MEMBER"/>
    <property type="match status" value="1"/>
</dbReference>
<dbReference type="Pfam" id="PF00164">
    <property type="entry name" value="Ribosom_S12_S23"/>
    <property type="match status" value="1"/>
</dbReference>
<dbReference type="PIRSF" id="PIRSF002133">
    <property type="entry name" value="Ribosomal_S12/S23"/>
    <property type="match status" value="1"/>
</dbReference>
<dbReference type="SUPFAM" id="SSF50249">
    <property type="entry name" value="Nucleic acid-binding proteins"/>
    <property type="match status" value="1"/>
</dbReference>
<dbReference type="PROSITE" id="PS00055">
    <property type="entry name" value="RIBOSOMAL_S12"/>
    <property type="match status" value="1"/>
</dbReference>
<proteinExistence type="evidence at transcript level"/>